<feature type="chain" id="PRO_1000053530" description="Phosphatidylglycerol--prolipoprotein diacylglyceryl transferase">
    <location>
        <begin position="1"/>
        <end position="290"/>
    </location>
</feature>
<feature type="transmembrane region" description="Helical" evidence="1">
    <location>
        <begin position="21"/>
        <end position="41"/>
    </location>
</feature>
<feature type="transmembrane region" description="Helical" evidence="1">
    <location>
        <begin position="60"/>
        <end position="80"/>
    </location>
</feature>
<feature type="transmembrane region" description="Helical" evidence="1">
    <location>
        <begin position="96"/>
        <end position="116"/>
    </location>
</feature>
<feature type="transmembrane region" description="Helical" evidence="1">
    <location>
        <begin position="124"/>
        <end position="144"/>
    </location>
</feature>
<feature type="transmembrane region" description="Helical" evidence="1">
    <location>
        <begin position="199"/>
        <end position="219"/>
    </location>
</feature>
<feature type="transmembrane region" description="Helical" evidence="1">
    <location>
        <begin position="226"/>
        <end position="246"/>
    </location>
</feature>
<feature type="transmembrane region" description="Helical" evidence="1">
    <location>
        <begin position="260"/>
        <end position="280"/>
    </location>
</feature>
<feature type="binding site" evidence="1">
    <location>
        <position position="143"/>
    </location>
    <ligand>
        <name>a 1,2-diacyl-sn-glycero-3-phospho-(1'-sn-glycerol)</name>
        <dbReference type="ChEBI" id="CHEBI:64716"/>
    </ligand>
</feature>
<reference key="1">
    <citation type="journal article" date="2006" name="J. Bacteriol.">
        <title>Complete genome sequence of Yersinia pestis strains Antiqua and Nepal516: evidence of gene reduction in an emerging pathogen.</title>
        <authorList>
            <person name="Chain P.S.G."/>
            <person name="Hu P."/>
            <person name="Malfatti S.A."/>
            <person name="Radnedge L."/>
            <person name="Larimer F."/>
            <person name="Vergez L.M."/>
            <person name="Worsham P."/>
            <person name="Chu M.C."/>
            <person name="Andersen G.L."/>
        </authorList>
    </citation>
    <scope>NUCLEOTIDE SEQUENCE [LARGE SCALE GENOMIC DNA]</scope>
    <source>
        <strain>Antiqua</strain>
    </source>
</reference>
<gene>
    <name evidence="1" type="primary">lgt</name>
    <name type="ordered locus">YPA_0484</name>
</gene>
<name>LGT_YERPA</name>
<keyword id="KW-0997">Cell inner membrane</keyword>
<keyword id="KW-1003">Cell membrane</keyword>
<keyword id="KW-0472">Membrane</keyword>
<keyword id="KW-0808">Transferase</keyword>
<keyword id="KW-0812">Transmembrane</keyword>
<keyword id="KW-1133">Transmembrane helix</keyword>
<protein>
    <recommendedName>
        <fullName evidence="1">Phosphatidylglycerol--prolipoprotein diacylglyceryl transferase</fullName>
        <ecNumber evidence="1">2.5.1.145</ecNumber>
    </recommendedName>
</protein>
<sequence length="290" mass="32809">MSNSYLAFPKFDPVIFSIGPVSLHWYGLMYLVGFVFAMWLAVRRANKPGSGWTKEEVENLLYAGFLGVFIGGRVGYVLFYNLPMFLDNPLYLFKVWDGGMSFHGGLIGVICVMLWFARRTKRNFFQVADFIAPLIPFGLGAGRLGNFINAELWGRVTTDTPWAMLFPTSRNTDIAIVAADPAKWQAIFNQYGVLPRHPSQLYEMILEGVVLFIILNVFIRKPRPMGSVSGLFLIGYGTFRIIVECFRQPDEQLGLFEGMISMGQILSVPMILAGIIMMIWAYRRPTQKLS</sequence>
<comment type="function">
    <text evidence="1">Catalyzes the transfer of the diacylglyceryl group from phosphatidylglycerol to the sulfhydryl group of the N-terminal cysteine of a prolipoprotein, the first step in the formation of mature lipoproteins.</text>
</comment>
<comment type="catalytic activity">
    <reaction evidence="1">
        <text>L-cysteinyl-[prolipoprotein] + a 1,2-diacyl-sn-glycero-3-phospho-(1'-sn-glycerol) = an S-1,2-diacyl-sn-glyceryl-L-cysteinyl-[prolipoprotein] + sn-glycerol 1-phosphate + H(+)</text>
        <dbReference type="Rhea" id="RHEA:56712"/>
        <dbReference type="Rhea" id="RHEA-COMP:14679"/>
        <dbReference type="Rhea" id="RHEA-COMP:14680"/>
        <dbReference type="ChEBI" id="CHEBI:15378"/>
        <dbReference type="ChEBI" id="CHEBI:29950"/>
        <dbReference type="ChEBI" id="CHEBI:57685"/>
        <dbReference type="ChEBI" id="CHEBI:64716"/>
        <dbReference type="ChEBI" id="CHEBI:140658"/>
        <dbReference type="EC" id="2.5.1.145"/>
    </reaction>
</comment>
<comment type="pathway">
    <text evidence="1">Protein modification; lipoprotein biosynthesis (diacylglyceryl transfer).</text>
</comment>
<comment type="subcellular location">
    <subcellularLocation>
        <location evidence="1">Cell inner membrane</location>
        <topology evidence="1">Multi-pass membrane protein</topology>
    </subcellularLocation>
</comment>
<comment type="similarity">
    <text evidence="1">Belongs to the Lgt family.</text>
</comment>
<dbReference type="EC" id="2.5.1.145" evidence="1"/>
<dbReference type="EMBL" id="CP000308">
    <property type="protein sequence ID" value="ABG12452.1"/>
    <property type="molecule type" value="Genomic_DNA"/>
</dbReference>
<dbReference type="RefSeq" id="WP_002211383.1">
    <property type="nucleotide sequence ID" value="NZ_CP009906.1"/>
</dbReference>
<dbReference type="SMR" id="Q1CAS0"/>
<dbReference type="GeneID" id="57973850"/>
<dbReference type="KEGG" id="ypa:YPA_0484"/>
<dbReference type="UniPathway" id="UPA00664"/>
<dbReference type="Proteomes" id="UP000001971">
    <property type="component" value="Chromosome"/>
</dbReference>
<dbReference type="GO" id="GO:0005886">
    <property type="term" value="C:plasma membrane"/>
    <property type="evidence" value="ECO:0007669"/>
    <property type="project" value="UniProtKB-SubCell"/>
</dbReference>
<dbReference type="GO" id="GO:0008961">
    <property type="term" value="F:phosphatidylglycerol-prolipoprotein diacylglyceryl transferase activity"/>
    <property type="evidence" value="ECO:0007669"/>
    <property type="project" value="UniProtKB-UniRule"/>
</dbReference>
<dbReference type="GO" id="GO:0042158">
    <property type="term" value="P:lipoprotein biosynthetic process"/>
    <property type="evidence" value="ECO:0007669"/>
    <property type="project" value="UniProtKB-UniRule"/>
</dbReference>
<dbReference type="HAMAP" id="MF_01147">
    <property type="entry name" value="Lgt"/>
    <property type="match status" value="1"/>
</dbReference>
<dbReference type="InterPro" id="IPR001640">
    <property type="entry name" value="Lgt"/>
</dbReference>
<dbReference type="NCBIfam" id="TIGR00544">
    <property type="entry name" value="lgt"/>
    <property type="match status" value="1"/>
</dbReference>
<dbReference type="PANTHER" id="PTHR30589:SF0">
    <property type="entry name" value="PHOSPHATIDYLGLYCEROL--PROLIPOPROTEIN DIACYLGLYCERYL TRANSFERASE"/>
    <property type="match status" value="1"/>
</dbReference>
<dbReference type="PANTHER" id="PTHR30589">
    <property type="entry name" value="PROLIPOPROTEIN DIACYLGLYCERYL TRANSFERASE"/>
    <property type="match status" value="1"/>
</dbReference>
<dbReference type="Pfam" id="PF01790">
    <property type="entry name" value="LGT"/>
    <property type="match status" value="1"/>
</dbReference>
<dbReference type="PROSITE" id="PS01311">
    <property type="entry name" value="LGT"/>
    <property type="match status" value="1"/>
</dbReference>
<organism>
    <name type="scientific">Yersinia pestis bv. Antiqua (strain Antiqua)</name>
    <dbReference type="NCBI Taxonomy" id="360102"/>
    <lineage>
        <taxon>Bacteria</taxon>
        <taxon>Pseudomonadati</taxon>
        <taxon>Pseudomonadota</taxon>
        <taxon>Gammaproteobacteria</taxon>
        <taxon>Enterobacterales</taxon>
        <taxon>Yersiniaceae</taxon>
        <taxon>Yersinia</taxon>
    </lineage>
</organism>
<accession>Q1CAS0</accession>
<evidence type="ECO:0000255" key="1">
    <source>
        <dbReference type="HAMAP-Rule" id="MF_01147"/>
    </source>
</evidence>
<proteinExistence type="inferred from homology"/>